<sequence length="491" mass="55644">MGDRGGAGGTRRRRTGSRPSSHGGGGPAAAEEEVRDAAAGPDMGAAGDAPAPAPSKDADDGVASGHWELRCHRLQDSLFSSDSGFNNYRGILNWCVVMLILSNARLFLENLIKYGILVDPIQVVSLFLKDPYSWPAPCLVIAANVFAVAAFQVEKRLAVGALTEQAGLLLHVANLATILCFPAAVVLLVESITPVGSLLALMVHTILFLKLFSYRDVNLWCRRARAKAASAGKRASSAAAPHTVSYPDNLTYRDLYYFLFAPTLCYELNFPRSPRIRKRFLLRRILEMLFFTQLQVGLIQQWMVPTIQNSMKPFKDMDYSRIIERLLKLAVPNHLIWLIFFYWLFHSCLNAVAELMQFGDREFYRDWWNSESVTYFWQNWNIPVHKWCIRHFYKPMLRRGSSRWMARIGVFLASAFFHEYLVSVPLRMFRLWAFTGMMAQIPLAWFVGRFFQGNYGNAAVWLTLIIGQPIAVLMYVHDYYVLNYEAPVAGA</sequence>
<feature type="chain" id="PRO_0000207653" description="Diacylglycerol O-acyltransferase 1">
    <location>
        <begin position="1"/>
        <end position="491"/>
    </location>
</feature>
<feature type="topological domain" description="Cytoplasmic" evidence="5">
    <location>
        <begin position="1"/>
        <end position="86"/>
    </location>
</feature>
<feature type="transmembrane region" description="Helical; Name=1" evidence="1">
    <location>
        <begin position="87"/>
        <end position="121"/>
    </location>
</feature>
<feature type="topological domain" description="Lumenal" evidence="5">
    <location>
        <begin position="122"/>
        <end position="133"/>
    </location>
</feature>
<feature type="transmembrane region" description="Helical; Name=2" evidence="1">
    <location>
        <begin position="134"/>
        <end position="159"/>
    </location>
</feature>
<feature type="topological domain" description="Cytoplasmic" evidence="5">
    <location>
        <begin position="160"/>
        <end position="164"/>
    </location>
</feature>
<feature type="transmembrane region" description="Helical; Name=3" evidence="1">
    <location>
        <begin position="165"/>
        <end position="187"/>
    </location>
</feature>
<feature type="topological domain" description="Lumenal" evidence="5">
    <location>
        <begin position="188"/>
        <end position="194"/>
    </location>
</feature>
<feature type="transmembrane region" description="Helical; Name=4" evidence="1">
    <location>
        <begin position="195"/>
        <end position="226"/>
    </location>
</feature>
<feature type="topological domain" description="Cytoplasmic" evidence="5">
    <location>
        <begin position="227"/>
        <end position="276"/>
    </location>
</feature>
<feature type="transmembrane region" description="Helical; Name=5" evidence="1">
    <location>
        <begin position="277"/>
        <end position="311"/>
    </location>
</feature>
<feature type="topological domain" description="Lumenal" evidence="5">
    <location>
        <begin position="312"/>
        <end position="318"/>
    </location>
</feature>
<feature type="transmembrane region" description="Helical; Name=6" evidence="1">
    <location>
        <begin position="319"/>
        <end position="356"/>
    </location>
</feature>
<feature type="topological domain" description="Cytoplasmic" evidence="5">
    <location>
        <begin position="357"/>
        <end position="402"/>
    </location>
</feature>
<feature type="transmembrane region" description="Helical; Name=7" evidence="1">
    <location>
        <begin position="403"/>
        <end position="423"/>
    </location>
</feature>
<feature type="topological domain" description="Lumenal" evidence="5">
    <location>
        <begin position="424"/>
        <end position="431"/>
    </location>
</feature>
<feature type="transmembrane region" description="Helical; Name=8" evidence="1">
    <location>
        <begin position="432"/>
        <end position="450"/>
    </location>
</feature>
<feature type="topological domain" description="Cytoplasmic" evidence="5">
    <location>
        <begin position="451"/>
        <end position="452"/>
    </location>
</feature>
<feature type="transmembrane region" description="Helical; Name=9" evidence="1">
    <location>
        <begin position="453"/>
        <end position="484"/>
    </location>
</feature>
<feature type="topological domain" description="Lumenal" evidence="5">
    <location>
        <begin position="485"/>
        <end position="491"/>
    </location>
</feature>
<feature type="region of interest" description="Involved in homomerization" evidence="3">
    <location>
        <begin position="1"/>
        <end position="94"/>
    </location>
</feature>
<feature type="region of interest" description="Disordered" evidence="1">
    <location>
        <begin position="1"/>
        <end position="60"/>
    </location>
</feature>
<feature type="region of interest" description="Extracellular loop 1 (EL1)" evidence="1">
    <location>
        <begin position="122"/>
        <end position="133"/>
    </location>
</feature>
<feature type="region of interest" description="MBOAT fold" evidence="1">
    <location>
        <begin position="134"/>
        <end position="491"/>
    </location>
</feature>
<feature type="region of interest" description="Intracellular loop 1 (IL1)" evidence="1">
    <location>
        <begin position="227"/>
        <end position="279"/>
    </location>
</feature>
<feature type="region of interest" description="Intracellular loop 2 (IL2)" evidence="1">
    <location>
        <begin position="357"/>
        <end position="402"/>
    </location>
</feature>
<feature type="region of interest" description="Amphipathic helix (AH)" evidence="1">
    <location>
        <begin position="383"/>
        <end position="397"/>
    </location>
</feature>
<feature type="short sequence motif" description="FYXDWWN motif" evidence="1">
    <location>
        <begin position="363"/>
        <end position="369"/>
    </location>
</feature>
<feature type="compositionally biased region" description="Low complexity" evidence="4">
    <location>
        <begin position="37"/>
        <end position="50"/>
    </location>
</feature>
<feature type="active site" evidence="3">
    <location>
        <position position="418"/>
    </location>
</feature>
<feature type="binding site" evidence="1">
    <location>
        <begin position="377"/>
        <end position="385"/>
    </location>
    <ligand>
        <name>an acyl-CoA</name>
        <dbReference type="ChEBI" id="CHEBI:58342"/>
    </ligand>
</feature>
<feature type="binding site" evidence="1">
    <location>
        <position position="393"/>
    </location>
    <ligand>
        <name>an acyl-CoA</name>
        <dbReference type="ChEBI" id="CHEBI:58342"/>
    </ligand>
</feature>
<feature type="binding site" evidence="1">
    <location>
        <position position="407"/>
    </location>
    <ligand>
        <name>an acyl-CoA</name>
        <dbReference type="ChEBI" id="CHEBI:58342"/>
    </ligand>
</feature>
<feature type="binding site" evidence="1">
    <location>
        <position position="480"/>
    </location>
    <ligand>
        <name>an acyl-CoA</name>
        <dbReference type="ChEBI" id="CHEBI:58342"/>
    </ligand>
</feature>
<feature type="site" description="Important for catalytic activity" evidence="1">
    <location>
        <position position="419"/>
    </location>
</feature>
<feature type="modified residue" description="Phosphoserine" evidence="1">
    <location>
        <position position="20"/>
    </location>
</feature>
<feature type="modified residue" description="Phosphoserine" evidence="1">
    <location>
        <position position="21"/>
    </location>
</feature>
<gene>
    <name type="primary">DGAT1</name>
    <name type="synonym">DGAT</name>
</gene>
<comment type="function">
    <text evidence="1 2 3">Catalyzes the terminal and only committed step in triacylglycerol synthesis by using diacylglycerol and fatty acyl CoA as substrates. Highly expressed in epithelial cells of the small intestine and its activity is essential for the absorption of dietary fats. In liver, plays a role in esterifying exogenous fatty acids to glycerol, and is required to synthesize fat for storage (By similarity). Also present in female mammary glands, where it produces fat in the milk (By similarity). May be involved in VLDL (very low density lipoprotein) assembly (By similarity). In contrast to DGAT2 it is not essential for survival (By similarity). Functions as the major acyl-CoA retinol acyltransferase (ARAT) in the skin, where it acts to maintain retinoid homeostasis and prevent retinoid toxicity leading to skin and hair disorders (By similarity). Exhibits additional acyltransferase activities, includin acyl CoA:monoacylglycerol acyltransferase (MGAT), wax monoester and wax diester synthases (By similarity). Also able to use 1-monoalkylglycerol (1-MAkG) as an acyl acceptor for the synthesis of monoalkyl-monoacylglycerol (MAMAG) (By similarity).</text>
</comment>
<comment type="catalytic activity">
    <reaction evidence="1">
        <text>an acyl-CoA + a 1,2-diacyl-sn-glycerol = a triacyl-sn-glycerol + CoA</text>
        <dbReference type="Rhea" id="RHEA:10868"/>
        <dbReference type="ChEBI" id="CHEBI:17815"/>
        <dbReference type="ChEBI" id="CHEBI:57287"/>
        <dbReference type="ChEBI" id="CHEBI:58342"/>
        <dbReference type="ChEBI" id="CHEBI:64615"/>
        <dbReference type="EC" id="2.3.1.20"/>
    </reaction>
    <physiologicalReaction direction="left-to-right" evidence="1">
        <dbReference type="Rhea" id="RHEA:10869"/>
    </physiologicalReaction>
</comment>
<comment type="catalytic activity">
    <reaction evidence="1">
        <text>all-trans-retinol + an acyl-CoA = an all-trans-retinyl ester + CoA</text>
        <dbReference type="Rhea" id="RHEA:11488"/>
        <dbReference type="ChEBI" id="CHEBI:17336"/>
        <dbReference type="ChEBI" id="CHEBI:57287"/>
        <dbReference type="ChEBI" id="CHEBI:58342"/>
        <dbReference type="ChEBI" id="CHEBI:63410"/>
        <dbReference type="EC" id="2.3.1.76"/>
    </reaction>
    <physiologicalReaction direction="left-to-right" evidence="1">
        <dbReference type="Rhea" id="RHEA:11489"/>
    </physiologicalReaction>
</comment>
<comment type="catalytic activity">
    <reaction evidence="1">
        <text>2-(9Z-octadecenoyl)-glycerol + (9Z)-octadecenoyl-CoA = 1,2-di-(9Z-octadecenoyl)-sn-glycerol + CoA</text>
        <dbReference type="Rhea" id="RHEA:37911"/>
        <dbReference type="ChEBI" id="CHEBI:52333"/>
        <dbReference type="ChEBI" id="CHEBI:57287"/>
        <dbReference type="ChEBI" id="CHEBI:57387"/>
        <dbReference type="ChEBI" id="CHEBI:73990"/>
    </reaction>
    <physiologicalReaction direction="left-to-right" evidence="1">
        <dbReference type="Rhea" id="RHEA:37912"/>
    </physiologicalReaction>
</comment>
<comment type="catalytic activity">
    <reaction evidence="1">
        <text>1,2-di-(9Z-octadecenoyl)-sn-glycerol + (9Z)-octadecenoyl-CoA = 1,2,3-tri-(9Z-octadecenoyl)-glycerol + CoA</text>
        <dbReference type="Rhea" id="RHEA:38219"/>
        <dbReference type="ChEBI" id="CHEBI:52333"/>
        <dbReference type="ChEBI" id="CHEBI:53753"/>
        <dbReference type="ChEBI" id="CHEBI:57287"/>
        <dbReference type="ChEBI" id="CHEBI:57387"/>
    </reaction>
    <physiologicalReaction direction="left-to-right" evidence="1">
        <dbReference type="Rhea" id="RHEA:38220"/>
    </physiologicalReaction>
</comment>
<comment type="catalytic activity">
    <reaction evidence="1 3">
        <text>all-trans-retinol + hexadecanoyl-CoA = all-trans-retinyl hexadecanoate + CoA</text>
        <dbReference type="Rhea" id="RHEA:38175"/>
        <dbReference type="ChEBI" id="CHEBI:17336"/>
        <dbReference type="ChEBI" id="CHEBI:17616"/>
        <dbReference type="ChEBI" id="CHEBI:57287"/>
        <dbReference type="ChEBI" id="CHEBI:57379"/>
    </reaction>
    <physiologicalReaction direction="left-to-right" evidence="1 3">
        <dbReference type="Rhea" id="RHEA:38176"/>
    </physiologicalReaction>
</comment>
<comment type="catalytic activity">
    <reaction evidence="1">
        <text>1-O-(9Z-octadecenyl)-glycerol + (9Z)-octadecenoyl-CoA = 1-O-(9Z-octadecyl)-3-(9Z-octadecenoyl)-glycerol + CoA</text>
        <dbReference type="Rhea" id="RHEA:55340"/>
        <dbReference type="ChEBI" id="CHEBI:34116"/>
        <dbReference type="ChEBI" id="CHEBI:57287"/>
        <dbReference type="ChEBI" id="CHEBI:57387"/>
        <dbReference type="ChEBI" id="CHEBI:197429"/>
    </reaction>
    <physiologicalReaction direction="left-to-right" evidence="1">
        <dbReference type="Rhea" id="RHEA:55341"/>
    </physiologicalReaction>
</comment>
<comment type="catalytic activity">
    <reaction evidence="1">
        <text>1-O-(9Z-octadecyl)-3-(9Z-octadecenoyl)-glycerol + (9Z)-octadecenoyl-CoA = 1-O-(9Z-octadecenyl)-2,3-di-(9Z-octadecenoyl)glycerol + CoA</text>
        <dbReference type="Rhea" id="RHEA:55344"/>
        <dbReference type="ChEBI" id="CHEBI:57287"/>
        <dbReference type="ChEBI" id="CHEBI:57387"/>
        <dbReference type="ChEBI" id="CHEBI:138735"/>
        <dbReference type="ChEBI" id="CHEBI:197429"/>
    </reaction>
    <physiologicalReaction direction="left-to-right" evidence="1">
        <dbReference type="Rhea" id="RHEA:55345"/>
    </physiologicalReaction>
</comment>
<comment type="catalytic activity">
    <reaction evidence="1">
        <text>1-(9Z-octadecenoyl)-glycerol + (9Z)-octadecenoyl-CoA = 1,2-di-(9Z-octadecenoyl)-glycerol + CoA</text>
        <dbReference type="Rhea" id="RHEA:37915"/>
        <dbReference type="ChEBI" id="CHEBI:52323"/>
        <dbReference type="ChEBI" id="CHEBI:57287"/>
        <dbReference type="ChEBI" id="CHEBI:57387"/>
        <dbReference type="ChEBI" id="CHEBI:75342"/>
    </reaction>
    <physiologicalReaction direction="left-to-right" evidence="1">
        <dbReference type="Rhea" id="RHEA:37916"/>
    </physiologicalReaction>
</comment>
<comment type="catalytic activity">
    <reaction evidence="1">
        <text>1,2-di-(9Z-octadecenoyl)-glycerol + (9Z)-octadecenoate + H(+) = 1,2,3-tri-(9Z-octadecenoyl)-glycerol + H2O</text>
        <dbReference type="Rhea" id="RHEA:38379"/>
        <dbReference type="ChEBI" id="CHEBI:15377"/>
        <dbReference type="ChEBI" id="CHEBI:15378"/>
        <dbReference type="ChEBI" id="CHEBI:30823"/>
        <dbReference type="ChEBI" id="CHEBI:52323"/>
        <dbReference type="ChEBI" id="CHEBI:53753"/>
    </reaction>
    <physiologicalReaction direction="left-to-right" evidence="1">
        <dbReference type="Rhea" id="RHEA:38380"/>
    </physiologicalReaction>
</comment>
<comment type="catalytic activity">
    <reaction evidence="3">
        <text>1-octadecanoyl-2-(5Z,8Z,11Z,14Z-eicosatetraenoyl)-sn-glycerol + (9Z)-octadecenoyl-CoA = 1-octadecanoyl-2-(5Z,8Z,11Z,14Z)-eicosatetraenoyl-3-(9Z)-octadecenoyl-sn-glycerol + CoA</text>
        <dbReference type="Rhea" id="RHEA:38307"/>
        <dbReference type="ChEBI" id="CHEBI:57287"/>
        <dbReference type="ChEBI" id="CHEBI:57387"/>
        <dbReference type="ChEBI" id="CHEBI:75728"/>
        <dbReference type="ChEBI" id="CHEBI:75729"/>
    </reaction>
    <physiologicalReaction direction="left-to-right" evidence="3">
        <dbReference type="Rhea" id="RHEA:38308"/>
    </physiologicalReaction>
</comment>
<comment type="catalytic activity">
    <reaction evidence="3">
        <text>hexadecane-1,2-diol + 2 hexadecanoyl-CoA = 1,2-O,O-dihexadecanoyl-1,2-hexadecanediol + 2 CoA</text>
        <dbReference type="Rhea" id="RHEA:38211"/>
        <dbReference type="ChEBI" id="CHEBI:57287"/>
        <dbReference type="ChEBI" id="CHEBI:57379"/>
        <dbReference type="ChEBI" id="CHEBI:75586"/>
        <dbReference type="ChEBI" id="CHEBI:75608"/>
    </reaction>
    <physiologicalReaction direction="left-to-right" evidence="3">
        <dbReference type="Rhea" id="RHEA:38212"/>
    </physiologicalReaction>
</comment>
<comment type="catalytic activity">
    <reaction evidence="3">
        <text>hexadecane-1,2-diol + hexadecanoyl-CoA = 2-hydroxyhexadecyl hexadecanoate + CoA</text>
        <dbReference type="Rhea" id="RHEA:38171"/>
        <dbReference type="ChEBI" id="CHEBI:57287"/>
        <dbReference type="ChEBI" id="CHEBI:57379"/>
        <dbReference type="ChEBI" id="CHEBI:75586"/>
        <dbReference type="ChEBI" id="CHEBI:75587"/>
    </reaction>
    <physiologicalReaction direction="left-to-right" evidence="3">
        <dbReference type="Rhea" id="RHEA:38172"/>
    </physiologicalReaction>
</comment>
<comment type="catalytic activity">
    <reaction evidence="3">
        <text>2-(9Z-octadecenoyl)-glycerol + hexadecanoyl-CoA = 1-hexadecanoyl-2-(9Z-octadecenoyl)-sn-glycerol + CoA</text>
        <dbReference type="Rhea" id="RHEA:38071"/>
        <dbReference type="ChEBI" id="CHEBI:57287"/>
        <dbReference type="ChEBI" id="CHEBI:57379"/>
        <dbReference type="ChEBI" id="CHEBI:73990"/>
        <dbReference type="ChEBI" id="CHEBI:75466"/>
    </reaction>
    <physiologicalReaction direction="left-to-right" evidence="3">
        <dbReference type="Rhea" id="RHEA:38072"/>
    </physiologicalReaction>
</comment>
<comment type="catalytic activity">
    <reaction evidence="3">
        <text>1,2-di-(9Z-octadecenoyl)-sn-glycerol + hexadecanoyl-CoA = 1,2-di-(9Z)-octadecenoyl-3-hexadecanoyl-sn-glycerol + CoA</text>
        <dbReference type="Rhea" id="RHEA:38163"/>
        <dbReference type="ChEBI" id="CHEBI:52333"/>
        <dbReference type="ChEBI" id="CHEBI:57287"/>
        <dbReference type="ChEBI" id="CHEBI:57379"/>
        <dbReference type="ChEBI" id="CHEBI:75583"/>
    </reaction>
    <physiologicalReaction direction="left-to-right" evidence="3">
        <dbReference type="Rhea" id="RHEA:38164"/>
    </physiologicalReaction>
</comment>
<comment type="catalytic activity">
    <reaction evidence="3">
        <text>hexadecan-1-ol + hexadecanoyl-CoA = hexadecanyl hexadecanoate + CoA</text>
        <dbReference type="Rhea" id="RHEA:38167"/>
        <dbReference type="ChEBI" id="CHEBI:16125"/>
        <dbReference type="ChEBI" id="CHEBI:57287"/>
        <dbReference type="ChEBI" id="CHEBI:57379"/>
        <dbReference type="ChEBI" id="CHEBI:75584"/>
    </reaction>
    <physiologicalReaction direction="left-to-right" evidence="3">
        <dbReference type="Rhea" id="RHEA:38168"/>
    </physiologicalReaction>
</comment>
<comment type="catalytic activity">
    <reaction evidence="3">
        <text>13-cis-retinol + hexadecanoyl-CoA = 13-cis-retinyl hexadecanoate + CoA</text>
        <dbReference type="Rhea" id="RHEA:55296"/>
        <dbReference type="ChEBI" id="CHEBI:45479"/>
        <dbReference type="ChEBI" id="CHEBI:57287"/>
        <dbReference type="ChEBI" id="CHEBI:57379"/>
        <dbReference type="ChEBI" id="CHEBI:138722"/>
    </reaction>
    <physiologicalReaction direction="left-to-right" evidence="3">
        <dbReference type="Rhea" id="RHEA:55297"/>
    </physiologicalReaction>
</comment>
<comment type="catalytic activity">
    <reaction evidence="3">
        <text>1,3-di-(9Z-octadecenoyl)-glycerol + (9Z)-octadecenoyl-CoA = 1,2,3-tri-(9Z-octadecenoyl)-glycerol + CoA</text>
        <dbReference type="Rhea" id="RHEA:38435"/>
        <dbReference type="ChEBI" id="CHEBI:53753"/>
        <dbReference type="ChEBI" id="CHEBI:57287"/>
        <dbReference type="ChEBI" id="CHEBI:57387"/>
        <dbReference type="ChEBI" id="CHEBI:75735"/>
    </reaction>
    <physiologicalReaction direction="left-to-right" evidence="3">
        <dbReference type="Rhea" id="RHEA:38436"/>
    </physiologicalReaction>
</comment>
<comment type="catalytic activity">
    <reaction evidence="3">
        <text>2,3-di-(9Z)-octadecenoyl-sn-glycerol + (9Z)-octadecenoyl-CoA = 1,2,3-tri-(9Z-octadecenoyl)-glycerol + CoA</text>
        <dbReference type="Rhea" id="RHEA:38439"/>
        <dbReference type="ChEBI" id="CHEBI:53753"/>
        <dbReference type="ChEBI" id="CHEBI:57287"/>
        <dbReference type="ChEBI" id="CHEBI:57387"/>
        <dbReference type="ChEBI" id="CHEBI:75824"/>
    </reaction>
    <physiologicalReaction direction="left-to-right" evidence="3">
        <dbReference type="Rhea" id="RHEA:38440"/>
    </physiologicalReaction>
</comment>
<comment type="pathway">
    <text>Lipid metabolism; glycerolipid metabolism.</text>
</comment>
<comment type="subunit">
    <text evidence="1">Homodimer or homotetramer; both forms have similar enzymatic activities.</text>
</comment>
<comment type="subcellular location">
    <subcellularLocation>
        <location evidence="3">Endoplasmic reticulum membrane</location>
        <topology evidence="3">Multi-pass membrane protein</topology>
    </subcellularLocation>
</comment>
<comment type="domain">
    <text evidence="1">The disordered N-terminal region is required for the diacylglycerol O-acyltransferase activity and may regulate enzymatic function via its interaction with the MBOAT fold.</text>
</comment>
<comment type="domain">
    <text evidence="1">The MBOAT fold forms a reaction chamber in the endoplasmic reticulum membrane that encloses the active sites. The reaction chamber has a tunnel to the cytosolic side and its entrance recognizes the hydrophilic CoA motif of an acyl-CoA molecule. The chamber has separate entrances for each of the two substrates, acyl-CoA and 1,2-diacyl-sn-glycerol.</text>
</comment>
<comment type="similarity">
    <text evidence="5">Belongs to the membrane-bound acyltransferase family. Sterol o-acyltransferase subfamily.</text>
</comment>
<proteinExistence type="evidence at transcript level"/>
<keyword id="KW-0012">Acyltransferase</keyword>
<keyword id="KW-0256">Endoplasmic reticulum</keyword>
<keyword id="KW-0443">Lipid metabolism</keyword>
<keyword id="KW-0472">Membrane</keyword>
<keyword id="KW-0597">Phosphoprotein</keyword>
<keyword id="KW-0808">Transferase</keyword>
<keyword id="KW-0812">Transmembrane</keyword>
<keyword id="KW-1133">Transmembrane helix</keyword>
<evidence type="ECO:0000250" key="1">
    <source>
        <dbReference type="UniProtKB" id="O75907"/>
    </source>
</evidence>
<evidence type="ECO:0000250" key="2">
    <source>
        <dbReference type="UniProtKB" id="Q8MK44"/>
    </source>
</evidence>
<evidence type="ECO:0000250" key="3">
    <source>
        <dbReference type="UniProtKB" id="Q9Z2A7"/>
    </source>
</evidence>
<evidence type="ECO:0000256" key="4">
    <source>
        <dbReference type="SAM" id="MobiDB-lite"/>
    </source>
</evidence>
<evidence type="ECO:0000305" key="5"/>
<protein>
    <recommendedName>
        <fullName evidence="5">Diacylglycerol O-acyltransferase 1</fullName>
        <ecNumber evidence="3">2.3.1.20</ecNumber>
    </recommendedName>
    <alternativeName>
        <fullName>Acyl-CoA retinol O-fatty-acyltransferase</fullName>
        <shortName>ARAT</shortName>
        <shortName>Retinol O-fatty-acyltransferase</shortName>
        <ecNumber evidence="3">2.3.1.76</ecNumber>
    </alternativeName>
    <alternativeName>
        <fullName>Diglyceride acyltransferase</fullName>
    </alternativeName>
</protein>
<dbReference type="EC" id="2.3.1.20" evidence="3"/>
<dbReference type="EC" id="2.3.1.76" evidence="3"/>
<dbReference type="EMBL" id="AF236018">
    <property type="protein sequence ID" value="AAF98557.1"/>
    <property type="molecule type" value="mRNA"/>
</dbReference>
<dbReference type="SMR" id="Q9GMF1"/>
<dbReference type="UniPathway" id="UPA00230"/>
<dbReference type="GO" id="GO:0005789">
    <property type="term" value="C:endoplasmic reticulum membrane"/>
    <property type="evidence" value="ECO:0007669"/>
    <property type="project" value="UniProtKB-SubCell"/>
</dbReference>
<dbReference type="GO" id="GO:0016020">
    <property type="term" value="C:membrane"/>
    <property type="evidence" value="ECO:0000250"/>
    <property type="project" value="UniProtKB"/>
</dbReference>
<dbReference type="GO" id="GO:0004144">
    <property type="term" value="F:diacylglycerol O-acyltransferase activity"/>
    <property type="evidence" value="ECO:0000250"/>
    <property type="project" value="UniProtKB"/>
</dbReference>
<dbReference type="GO" id="GO:0050252">
    <property type="term" value="F:retinol O-fatty-acyltransferase activity"/>
    <property type="evidence" value="ECO:0007669"/>
    <property type="project" value="UniProtKB-EC"/>
</dbReference>
<dbReference type="GO" id="GO:0046339">
    <property type="term" value="P:diacylglycerol metabolic process"/>
    <property type="evidence" value="ECO:0000250"/>
    <property type="project" value="UniProtKB"/>
</dbReference>
<dbReference type="GO" id="GO:0006640">
    <property type="term" value="P:monoacylglycerol biosynthetic process"/>
    <property type="evidence" value="ECO:0000250"/>
    <property type="project" value="UniProtKB"/>
</dbReference>
<dbReference type="GO" id="GO:0019432">
    <property type="term" value="P:triglyceride biosynthetic process"/>
    <property type="evidence" value="ECO:0000250"/>
    <property type="project" value="UniProtKB"/>
</dbReference>
<dbReference type="InterPro" id="IPR027251">
    <property type="entry name" value="Diacylglycerol_acylTrfase1"/>
</dbReference>
<dbReference type="InterPro" id="IPR004299">
    <property type="entry name" value="MBOAT_fam"/>
</dbReference>
<dbReference type="InterPro" id="IPR014371">
    <property type="entry name" value="Oat_ACAT_DAG_ARE"/>
</dbReference>
<dbReference type="PANTHER" id="PTHR10408:SF7">
    <property type="entry name" value="DIACYLGLYCEROL O-ACYLTRANSFERASE 1"/>
    <property type="match status" value="1"/>
</dbReference>
<dbReference type="PANTHER" id="PTHR10408">
    <property type="entry name" value="STEROL O-ACYLTRANSFERASE"/>
    <property type="match status" value="1"/>
</dbReference>
<dbReference type="Pfam" id="PF03062">
    <property type="entry name" value="MBOAT"/>
    <property type="match status" value="1"/>
</dbReference>
<dbReference type="PIRSF" id="PIRSF000439">
    <property type="entry name" value="Oat_ACAT_DAG_ARE"/>
    <property type="match status" value="1"/>
</dbReference>
<dbReference type="PIRSF" id="PIRSF500231">
    <property type="entry name" value="Oat_dag"/>
    <property type="match status" value="1"/>
</dbReference>
<reference key="1">
    <citation type="submission" date="2000-02" db="EMBL/GenBank/DDBJ databases">
        <authorList>
            <person name="Joyce C.W."/>
            <person name="Davis M.A."/>
            <person name="Anderson R.A."/>
            <person name="Rudel L.L."/>
        </authorList>
    </citation>
    <scope>NUCLEOTIDE SEQUENCE [MRNA]</scope>
    <source>
        <tissue>Liver</tissue>
    </source>
</reference>
<accession>Q9GMF1</accession>
<name>DGAT1_CHLAE</name>
<organism>
    <name type="scientific">Chlorocebus aethiops</name>
    <name type="common">Green monkey</name>
    <name type="synonym">Cercopithecus aethiops</name>
    <dbReference type="NCBI Taxonomy" id="9534"/>
    <lineage>
        <taxon>Eukaryota</taxon>
        <taxon>Metazoa</taxon>
        <taxon>Chordata</taxon>
        <taxon>Craniata</taxon>
        <taxon>Vertebrata</taxon>
        <taxon>Euteleostomi</taxon>
        <taxon>Mammalia</taxon>
        <taxon>Eutheria</taxon>
        <taxon>Euarchontoglires</taxon>
        <taxon>Primates</taxon>
        <taxon>Haplorrhini</taxon>
        <taxon>Catarrhini</taxon>
        <taxon>Cercopithecidae</taxon>
        <taxon>Cercopithecinae</taxon>
        <taxon>Chlorocebus</taxon>
    </lineage>
</organism>